<gene>
    <name evidence="1" type="primary">rhaR</name>
    <name type="ordered locus">SeSA_A4263</name>
</gene>
<reference key="1">
    <citation type="journal article" date="2011" name="J. Bacteriol.">
        <title>Comparative genomics of 28 Salmonella enterica isolates: evidence for CRISPR-mediated adaptive sublineage evolution.</title>
        <authorList>
            <person name="Fricke W.F."/>
            <person name="Mammel M.K."/>
            <person name="McDermott P.F."/>
            <person name="Tartera C."/>
            <person name="White D.G."/>
            <person name="Leclerc J.E."/>
            <person name="Ravel J."/>
            <person name="Cebula T.A."/>
        </authorList>
    </citation>
    <scope>NUCLEOTIDE SEQUENCE [LARGE SCALE GENOMIC DNA]</scope>
    <source>
        <strain>CVM19633</strain>
    </source>
</reference>
<keyword id="KW-0010">Activator</keyword>
<keyword id="KW-0963">Cytoplasm</keyword>
<keyword id="KW-0238">DNA-binding</keyword>
<keyword id="KW-0677">Repeat</keyword>
<keyword id="KW-0684">Rhamnose metabolism</keyword>
<keyword id="KW-0804">Transcription</keyword>
<keyword id="KW-0805">Transcription regulation</keyword>
<sequence length="282" mass="32911">MANQLILLKKDFFTDEQQAVTVADRYPQDVFAEHTHEFCELVMVWRGNGLHVLNERPYRITRGDLFYIRAEDKHSYTSVNDLVLQNIIYCPERLKLNVNWQAMIPGFQGAQWHPHWRLGSMGMNQARQVINQLEHESNGRDPLANEMAELLFGQLVMTLKRHRYATDDLPATSRETLLDKLITALANSLERPFALDAFCQQEQCSERVLRQQFRAQTGMTINQYLRQVRICHAQYLLQHSPLMISEISMQCGFEDSNYFSVVFTRETGMTPSQWRHLSNQSD</sequence>
<dbReference type="EMBL" id="CP001127">
    <property type="protein sequence ID" value="ACF92845.1"/>
    <property type="molecule type" value="Genomic_DNA"/>
</dbReference>
<dbReference type="RefSeq" id="WP_000013292.1">
    <property type="nucleotide sequence ID" value="NC_011094.1"/>
</dbReference>
<dbReference type="SMR" id="B4TPR0"/>
<dbReference type="KEGG" id="sew:SeSA_A4263"/>
<dbReference type="HOGENOM" id="CLU_000445_88_5_6"/>
<dbReference type="Proteomes" id="UP000001865">
    <property type="component" value="Chromosome"/>
</dbReference>
<dbReference type="GO" id="GO:0005737">
    <property type="term" value="C:cytoplasm"/>
    <property type="evidence" value="ECO:0007669"/>
    <property type="project" value="UniProtKB-SubCell"/>
</dbReference>
<dbReference type="GO" id="GO:0003700">
    <property type="term" value="F:DNA-binding transcription factor activity"/>
    <property type="evidence" value="ECO:0007669"/>
    <property type="project" value="UniProtKB-UniRule"/>
</dbReference>
<dbReference type="GO" id="GO:0043565">
    <property type="term" value="F:sequence-specific DNA binding"/>
    <property type="evidence" value="ECO:0007669"/>
    <property type="project" value="InterPro"/>
</dbReference>
<dbReference type="GO" id="GO:0045893">
    <property type="term" value="P:positive regulation of DNA-templated transcription"/>
    <property type="evidence" value="ECO:0007669"/>
    <property type="project" value="UniProtKB-UniRule"/>
</dbReference>
<dbReference type="GO" id="GO:0019299">
    <property type="term" value="P:rhamnose metabolic process"/>
    <property type="evidence" value="ECO:0007669"/>
    <property type="project" value="UniProtKB-UniRule"/>
</dbReference>
<dbReference type="CDD" id="cd06977">
    <property type="entry name" value="cupin_RhaR_RhaS-like_N"/>
    <property type="match status" value="1"/>
</dbReference>
<dbReference type="Gene3D" id="1.10.10.60">
    <property type="entry name" value="Homeodomain-like"/>
    <property type="match status" value="1"/>
</dbReference>
<dbReference type="Gene3D" id="2.60.120.10">
    <property type="entry name" value="Jelly Rolls"/>
    <property type="match status" value="1"/>
</dbReference>
<dbReference type="HAMAP" id="MF_01533">
    <property type="entry name" value="HTH_type_RhaR"/>
    <property type="match status" value="1"/>
</dbReference>
<dbReference type="InterPro" id="IPR003313">
    <property type="entry name" value="AraC-bd"/>
</dbReference>
<dbReference type="InterPro" id="IPR009057">
    <property type="entry name" value="Homeodomain-like_sf"/>
</dbReference>
<dbReference type="InterPro" id="IPR018060">
    <property type="entry name" value="HTH_AraC"/>
</dbReference>
<dbReference type="InterPro" id="IPR018062">
    <property type="entry name" value="HTH_AraC-typ_CS"/>
</dbReference>
<dbReference type="InterPro" id="IPR047220">
    <property type="entry name" value="RhaR_RhaS-like_N"/>
</dbReference>
<dbReference type="InterPro" id="IPR014710">
    <property type="entry name" value="RmlC-like_jellyroll"/>
</dbReference>
<dbReference type="InterPro" id="IPR011051">
    <property type="entry name" value="RmlC_Cupin_sf"/>
</dbReference>
<dbReference type="InterPro" id="IPR023699">
    <property type="entry name" value="Tscrpt_act_RhaR"/>
</dbReference>
<dbReference type="InterPro" id="IPR020449">
    <property type="entry name" value="Tscrpt_reg_AraC-type_HTH"/>
</dbReference>
<dbReference type="NCBIfam" id="NF010025">
    <property type="entry name" value="PRK13500.1"/>
    <property type="match status" value="1"/>
</dbReference>
<dbReference type="NCBIfam" id="NF010026">
    <property type="entry name" value="PRK13501.1"/>
    <property type="match status" value="1"/>
</dbReference>
<dbReference type="NCBIfam" id="NF010027">
    <property type="entry name" value="PRK13502.1"/>
    <property type="match status" value="1"/>
</dbReference>
<dbReference type="PANTHER" id="PTHR43280">
    <property type="entry name" value="ARAC-FAMILY TRANSCRIPTIONAL REGULATOR"/>
    <property type="match status" value="1"/>
</dbReference>
<dbReference type="PANTHER" id="PTHR43280:SF13">
    <property type="entry name" value="HTH-TYPE TRANSCRIPTIONAL ACTIVATOR RHAR"/>
    <property type="match status" value="1"/>
</dbReference>
<dbReference type="Pfam" id="PF02311">
    <property type="entry name" value="AraC_binding"/>
    <property type="match status" value="1"/>
</dbReference>
<dbReference type="Pfam" id="PF12833">
    <property type="entry name" value="HTH_18"/>
    <property type="match status" value="1"/>
</dbReference>
<dbReference type="PRINTS" id="PR00032">
    <property type="entry name" value="HTHARAC"/>
</dbReference>
<dbReference type="SMART" id="SM00342">
    <property type="entry name" value="HTH_ARAC"/>
    <property type="match status" value="1"/>
</dbReference>
<dbReference type="SUPFAM" id="SSF46689">
    <property type="entry name" value="Homeodomain-like"/>
    <property type="match status" value="2"/>
</dbReference>
<dbReference type="SUPFAM" id="SSF51182">
    <property type="entry name" value="RmlC-like cupins"/>
    <property type="match status" value="1"/>
</dbReference>
<dbReference type="PROSITE" id="PS00041">
    <property type="entry name" value="HTH_ARAC_FAMILY_1"/>
    <property type="match status" value="1"/>
</dbReference>
<dbReference type="PROSITE" id="PS01124">
    <property type="entry name" value="HTH_ARAC_FAMILY_2"/>
    <property type="match status" value="1"/>
</dbReference>
<feature type="chain" id="PRO_1000200944" description="HTH-type transcriptional activator RhaR">
    <location>
        <begin position="1"/>
        <end position="282"/>
    </location>
</feature>
<feature type="domain" description="HTH araC/xylS-type" evidence="1">
    <location>
        <begin position="179"/>
        <end position="277"/>
    </location>
</feature>
<feature type="DNA-binding region" description="H-T-H motif" evidence="1">
    <location>
        <begin position="196"/>
        <end position="217"/>
    </location>
</feature>
<feature type="DNA-binding region" description="H-T-H motif" evidence="1">
    <location>
        <begin position="244"/>
        <end position="267"/>
    </location>
</feature>
<feature type="site" description="Interaction with sigma-70" evidence="1">
    <location>
        <position position="246"/>
    </location>
</feature>
<name>RHAR_SALSV</name>
<protein>
    <recommendedName>
        <fullName evidence="1">HTH-type transcriptional activator RhaR</fullName>
    </recommendedName>
    <alternativeName>
        <fullName evidence="1">L-rhamnose operon transcriptional activator RhaR</fullName>
    </alternativeName>
</protein>
<accession>B4TPR0</accession>
<comment type="function">
    <text evidence="1">Activates expression of the rhaSR operon in response to L-rhamnose.</text>
</comment>
<comment type="subunit">
    <text evidence="1">Binds DNA as a dimer.</text>
</comment>
<comment type="subcellular location">
    <subcellularLocation>
        <location evidence="1">Cytoplasm</location>
    </subcellularLocation>
</comment>
<organism>
    <name type="scientific">Salmonella schwarzengrund (strain CVM19633)</name>
    <dbReference type="NCBI Taxonomy" id="439843"/>
    <lineage>
        <taxon>Bacteria</taxon>
        <taxon>Pseudomonadati</taxon>
        <taxon>Pseudomonadota</taxon>
        <taxon>Gammaproteobacteria</taxon>
        <taxon>Enterobacterales</taxon>
        <taxon>Enterobacteriaceae</taxon>
        <taxon>Salmonella</taxon>
    </lineage>
</organism>
<proteinExistence type="inferred from homology"/>
<evidence type="ECO:0000255" key="1">
    <source>
        <dbReference type="HAMAP-Rule" id="MF_01533"/>
    </source>
</evidence>